<comment type="function">
    <text evidence="1 6 8 11 13 15 16">Component of the cleavage and polyadenylation specificity factor (CPSF) complex that play a key role in pre-mRNA 3'-end formation. May interact with poly(A) polymerase and other factors to bring about cleavage and poly(A) addition (By similarity). Mediates poly(A) site selection (PubMed:23136375). Binds RNA in a calcium-dependent manner (PubMed:16500995, PubMed:17576667, PubMed:20214900). Exhibits endonuclease activity with an ability to nick and degrade linear as well as circular single-stranded RNA that leaves RNA 3' ends with hydroxyl groups, thus mediating processing of the pre-mRNA as a prelude to the polyadenylation (PubMed:17576667). Involved in the post-transcriptional control, probably via poly(A) addition, of the responses of plants to stress, especially genes mediating tolerance to oxidative stress (PubMed:18545667). Plays a role in the regulation of salicylic acid (SA) production via the control of messenger RNA 3' end processing, thus being a key component of programmed cell death and plant immune responses required for resistance to virulent Pseudomonas syringae pv tomato DC3000 (Pst) (PubMed:24706550).</text>
</comment>
<comment type="activity regulation">
    <text evidence="8 9">Endonuclease activity is repressed by the N-terminal domain of FIPS5 (PubMed:17576667). Nuclease activity is inhibited by zinc (&gt;100 uM), cadmium in a progressive manner (50 percent activity at 1 mM Cd(2+)), and high salt levels (e.g. KCl or NaCl &gt;600 mM). Stimulated by ATP in the presence of Zn(2+), even at inhibitory zinc concentrations. Elevated temperatures prevent RNA-binding at 55 degrees Celsius, but endonuclease activity at 70 degrees Celsius. The sulfhydryl reagent dithiothreitol (DTT) inhibits both RNA-binding and nuclease activities (PubMed:18331819).</text>
</comment>
<comment type="subunit">
    <text evidence="5 6 7 8 10 12 13 20">Component of the cleavage and polyadenylation specificity factor (CPSF) complex (Probable). Can form homodimers (PubMed:18479511). Binds to calmodulin (PubMed:16500995, PubMed:16897494). Forms a complex with cleavage and polyadenylation specificity factor (CPSF) subunits CPSF73-I, CPSF73-II, CPSF100, CPSF160, CFIS2, FIPS3, FIPS5, PAPS2, PAPS3, CLPS3, PCFS1, PCFS4, CSTF50 and CSTF77 (PubMed:16282318, PubMed:17576667, PubMed:18479511, PubMed:19573236, PubMed:20214900).</text>
</comment>
<comment type="interaction">
    <interactant intactId="EBI-962511">
        <id>A9LNK9</id>
    </interactant>
    <interactant intactId="EBI-1775444">
        <id>Q9LKF9</id>
        <label>CPSF100</label>
    </interactant>
    <organismsDiffer>false</organismsDiffer>
    <experiments>3</experiments>
</comment>
<comment type="interaction">
    <interactant intactId="EBI-962511">
        <id>A9LNK9</id>
    </interactant>
    <interactant intactId="EBI-1775543">
        <id>Q8GUP1</id>
        <label>CSTF77</label>
    </interactant>
    <organismsDiffer>false</organismsDiffer>
    <experiments>2</experiments>
</comment>
<comment type="interaction">
    <interactant intactId="EBI-962511">
        <id>A9LNK9</id>
    </interactant>
    <interactant intactId="EBI-962489">
        <id>F4KDH9</id>
        <label>FIPS5</label>
    </interactant>
    <organismsDiffer>false</organismsDiffer>
    <experiments>3</experiments>
</comment>
<comment type="interaction">
    <interactant intactId="EBI-962511">
        <id>A9LNK9</id>
    </interactant>
    <interactant intactId="EBI-15205450">
        <id>O80438</id>
        <label>MAK3</label>
    </interactant>
    <organismsDiffer>false</organismsDiffer>
    <experiments>3</experiments>
</comment>
<comment type="interaction">
    <interactant intactId="EBI-962511">
        <id>A9LNK9</id>
    </interactant>
    <interactant intactId="EBI-4461713">
        <id>Q8VY64</id>
        <label>NFYA4</label>
    </interactant>
    <organismsDiffer>false</organismsDiffer>
    <experiments>4</experiments>
</comment>
<comment type="interaction">
    <interactant intactId="EBI-962511">
        <id>A9LNK9</id>
    </interactant>
    <interactant intactId="EBI-1775513">
        <id>O82312</id>
        <label>PAPS2</label>
    </interactant>
    <organismsDiffer>false</organismsDiffer>
    <experiments>3</experiments>
</comment>
<comment type="interaction">
    <interactant intactId="EBI-962511">
        <id>A9LNK9</id>
    </interactant>
    <interactant intactId="EBI-4425094">
        <id>O82239</id>
        <label>RFI2</label>
    </interactant>
    <organismsDiffer>false</organismsDiffer>
    <experiments>3</experiments>
</comment>
<comment type="interaction">
    <interactant intactId="EBI-962511">
        <id>A9LNK9</id>
    </interactant>
    <interactant intactId="EBI-4424877">
        <id>Q9S7W5</id>
        <label>TCP13</label>
    </interactant>
    <organismsDiffer>false</organismsDiffer>
    <experiments>3</experiments>
</comment>
<comment type="interaction">
    <interactant intactId="EBI-962511">
        <id>A9LNK9</id>
    </interactant>
    <interactant intactId="EBI-4424563">
        <id>Q93Z00</id>
        <label>TCP14</label>
    </interactant>
    <organismsDiffer>false</organismsDiffer>
    <experiments>3</experiments>
</comment>
<comment type="interaction">
    <interactant intactId="EBI-962511">
        <id>A9LNK9</id>
    </interactant>
    <interactant intactId="EBI-4426144">
        <id>Q9C9L2</id>
        <label>TCP15</label>
    </interactant>
    <organismsDiffer>false</organismsDiffer>
    <experiments>3</experiments>
</comment>
<comment type="interaction">
    <interactant intactId="EBI-962511">
        <id>A9LNK9</id>
    </interactant>
    <interactant intactId="EBI-15192297">
        <id>Q9LQF0</id>
        <label>TCP23</label>
    </interactant>
    <organismsDiffer>false</organismsDiffer>
    <experiments>3</experiments>
</comment>
<comment type="interaction">
    <interactant intactId="EBI-962511">
        <id>A9LNK9</id>
    </interactant>
    <interactant intactId="EBI-15192325">
        <id>Q8LPR5</id>
        <label>TCP4</label>
    </interactant>
    <organismsDiffer>false</organismsDiffer>
    <experiments>4</experiments>
</comment>
<comment type="subcellular location">
    <subcellularLocation>
        <location evidence="6 12">Nucleus</location>
    </subcellularLocation>
    <subcellularLocation>
        <location evidence="12">Cytoplasm</location>
    </subcellularLocation>
    <text evidence="12">Localized in the cytoplasm when not in complex or when associated with CPSF100, but move to the nucleus when associated with the cleavage and polyadenylation specificity factor (CPSF) subunits CPSF160 or CPSF73s.</text>
</comment>
<comment type="alternative products">
    <event type="alternative splicing"/>
    <isoform>
        <id>A9LNK9-1</id>
        <name>1</name>
        <name>AtCPSF30-YT521B</name>
        <sequence type="displayed"/>
    </isoform>
    <isoform>
        <id>A9LNK9-2</id>
        <name>2</name>
        <name>AtCPSF30</name>
        <sequence type="described" ref="VSP_037127 VSP_037128"/>
    </isoform>
</comment>
<comment type="tissue specificity">
    <text evidence="7 11">Expressed in seedlings, roots, leaves, siliques, stems and flowers.</text>
</comment>
<comment type="induction">
    <text evidence="11">Isoform 2 is up-regulated by exposure to the oxidative agent methyl viologen (MV).</text>
</comment>
<comment type="disruption phenotype">
    <text evidence="11 15 16">In oxt6, small plants, especially at temperatures above 22 degrees Celsius. Enhanced tolerance to oxidative stress associated with elevated constitutive expression of genes that encode proteins containing thioredoxin- and glutaredoxin- related domains (PubMed:18545667). Altered poly(A) site choice (PubMed:18545667, PubMed:23136375). Suppresses cell death in lesion-mimic mutants (e.g. mips1, lsd1, mkk4, cpr5, and cat2). Enhanced sensitivity to virulent Pseudomonas syringae pv tomato DC3000 (Pst) (PubMed:24706550).</text>
</comment>
<comment type="similarity">
    <text evidence="20">Belongs to the CPSF4/YTH1 family.</text>
</comment>
<comment type="sequence caution" evidence="20">
    <conflict type="erroneous gene model prediction">
        <sequence resource="EMBL-CDS" id="AAF19746"/>
    </conflict>
</comment>
<dbReference type="EC" id="3.1.21.-" evidence="8"/>
<dbReference type="EMBL" id="EU250988">
    <property type="protein sequence ID" value="ABX26048.1"/>
    <property type="molecule type" value="mRNA"/>
</dbReference>
<dbReference type="EMBL" id="AY140901">
    <property type="protein sequence ID" value="AAN41459.1"/>
    <property type="molecule type" value="mRNA"/>
</dbReference>
<dbReference type="EMBL" id="AC009917">
    <property type="protein sequence ID" value="AAF19746.1"/>
    <property type="status" value="ALT_SEQ"/>
    <property type="molecule type" value="Genomic_DNA"/>
</dbReference>
<dbReference type="EMBL" id="AC009917">
    <property type="protein sequence ID" value="AAF19747.1"/>
    <property type="molecule type" value="Genomic_DNA"/>
</dbReference>
<dbReference type="EMBL" id="CP002684">
    <property type="protein sequence ID" value="AEE31221.1"/>
    <property type="molecule type" value="Genomic_DNA"/>
</dbReference>
<dbReference type="PIR" id="B86429">
    <property type="entry name" value="B86429"/>
</dbReference>
<dbReference type="PIR" id="C86429">
    <property type="entry name" value="C86429"/>
</dbReference>
<dbReference type="RefSeq" id="NP_174334.2">
    <molecule id="A9LNK9-1"/>
    <property type="nucleotide sequence ID" value="NM_102782.4"/>
</dbReference>
<dbReference type="PDB" id="5ZUU">
    <property type="method" value="X-ray"/>
    <property type="resolution" value="1.95 A"/>
    <property type="chains" value="A/B/C/D=221-400"/>
</dbReference>
<dbReference type="PDBsum" id="5ZUU"/>
<dbReference type="SMR" id="A9LNK9"/>
<dbReference type="BioGRID" id="25160">
    <property type="interactions" value="50"/>
</dbReference>
<dbReference type="FunCoup" id="A9LNK9">
    <property type="interactions" value="1026"/>
</dbReference>
<dbReference type="IntAct" id="A9LNK9">
    <property type="interactions" value="49"/>
</dbReference>
<dbReference type="MINT" id="A9LNK9"/>
<dbReference type="STRING" id="3702.A9LNK9"/>
<dbReference type="iPTMnet" id="A9LNK9"/>
<dbReference type="PaxDb" id="3702-AT1G30460.1"/>
<dbReference type="ProteomicsDB" id="220550">
    <molecule id="A9LNK9-1"/>
</dbReference>
<dbReference type="EnsemblPlants" id="AT1G30460.1">
    <molecule id="A9LNK9-1"/>
    <property type="protein sequence ID" value="AT1G30460.1"/>
    <property type="gene ID" value="AT1G30460"/>
</dbReference>
<dbReference type="GeneID" id="839925"/>
<dbReference type="Gramene" id="AT1G30460.1">
    <molecule id="A9LNK9-1"/>
    <property type="protein sequence ID" value="AT1G30460.1"/>
    <property type="gene ID" value="AT1G30460"/>
</dbReference>
<dbReference type="KEGG" id="ath:AT1G30460"/>
<dbReference type="Araport" id="AT1G30460"/>
<dbReference type="TAIR" id="AT1G30460">
    <property type="gene designation" value="CPSF30"/>
</dbReference>
<dbReference type="eggNOG" id="KOG1040">
    <property type="taxonomic scope" value="Eukaryota"/>
</dbReference>
<dbReference type="eggNOG" id="KOG1902">
    <property type="taxonomic scope" value="Eukaryota"/>
</dbReference>
<dbReference type="HOGENOM" id="CLU_413563_0_0_1"/>
<dbReference type="InParanoid" id="A9LNK9"/>
<dbReference type="OMA" id="VGMAPFM"/>
<dbReference type="OrthoDB" id="306690at2759"/>
<dbReference type="PhylomeDB" id="A9LNK9"/>
<dbReference type="PRO" id="PR:A9LNK9"/>
<dbReference type="Proteomes" id="UP000006548">
    <property type="component" value="Chromosome 1"/>
</dbReference>
<dbReference type="ExpressionAtlas" id="A9LNK9">
    <property type="expression patterns" value="baseline and differential"/>
</dbReference>
<dbReference type="GO" id="GO:0005737">
    <property type="term" value="C:cytoplasm"/>
    <property type="evidence" value="ECO:0000314"/>
    <property type="project" value="UniProtKB"/>
</dbReference>
<dbReference type="GO" id="GO:0005847">
    <property type="term" value="C:mRNA cleavage and polyadenylation specificity factor complex"/>
    <property type="evidence" value="ECO:0000250"/>
    <property type="project" value="TAIR"/>
</dbReference>
<dbReference type="GO" id="GO:0005634">
    <property type="term" value="C:nucleus"/>
    <property type="evidence" value="ECO:0000314"/>
    <property type="project" value="UniProtKB"/>
</dbReference>
<dbReference type="GO" id="GO:0005516">
    <property type="term" value="F:calmodulin binding"/>
    <property type="evidence" value="ECO:0000314"/>
    <property type="project" value="TAIR"/>
</dbReference>
<dbReference type="GO" id="GO:0003677">
    <property type="term" value="F:DNA binding"/>
    <property type="evidence" value="ECO:0007669"/>
    <property type="project" value="UniProtKB-KW"/>
</dbReference>
<dbReference type="GO" id="GO:0004519">
    <property type="term" value="F:endonuclease activity"/>
    <property type="evidence" value="ECO:0000314"/>
    <property type="project" value="TAIR"/>
</dbReference>
<dbReference type="GO" id="GO:0003729">
    <property type="term" value="F:mRNA binding"/>
    <property type="evidence" value="ECO:0000314"/>
    <property type="project" value="TAIR"/>
</dbReference>
<dbReference type="GO" id="GO:0003723">
    <property type="term" value="F:RNA binding"/>
    <property type="evidence" value="ECO:0000314"/>
    <property type="project" value="UniProtKB"/>
</dbReference>
<dbReference type="GO" id="GO:0004521">
    <property type="term" value="F:RNA endonuclease activity"/>
    <property type="evidence" value="ECO:0000314"/>
    <property type="project" value="TAIR"/>
</dbReference>
<dbReference type="GO" id="GO:0008270">
    <property type="term" value="F:zinc ion binding"/>
    <property type="evidence" value="ECO:0007669"/>
    <property type="project" value="UniProtKB-KW"/>
</dbReference>
<dbReference type="GO" id="GO:0031124">
    <property type="term" value="P:mRNA 3'-end processing"/>
    <property type="evidence" value="ECO:0000315"/>
    <property type="project" value="UniProtKB"/>
</dbReference>
<dbReference type="GO" id="GO:0009626">
    <property type="term" value="P:plant-type hypersensitive response"/>
    <property type="evidence" value="ECO:0007669"/>
    <property type="project" value="UniProtKB-KW"/>
</dbReference>
<dbReference type="GO" id="GO:0034052">
    <property type="term" value="P:positive regulation of plant-type hypersensitive response"/>
    <property type="evidence" value="ECO:0000315"/>
    <property type="project" value="UniProtKB"/>
</dbReference>
<dbReference type="GO" id="GO:0043068">
    <property type="term" value="P:positive regulation of programmed cell death"/>
    <property type="evidence" value="ECO:0000315"/>
    <property type="project" value="UniProtKB"/>
</dbReference>
<dbReference type="GO" id="GO:2000031">
    <property type="term" value="P:regulation of salicylic acid mediated signaling pathway"/>
    <property type="evidence" value="ECO:0000315"/>
    <property type="project" value="UniProtKB"/>
</dbReference>
<dbReference type="GO" id="GO:0006979">
    <property type="term" value="P:response to oxidative stress"/>
    <property type="evidence" value="ECO:0000315"/>
    <property type="project" value="TAIR"/>
</dbReference>
<dbReference type="GO" id="GO:0006396">
    <property type="term" value="P:RNA processing"/>
    <property type="evidence" value="ECO:0000314"/>
    <property type="project" value="TAIR"/>
</dbReference>
<dbReference type="CDD" id="cd21134">
    <property type="entry name" value="YTH"/>
    <property type="match status" value="1"/>
</dbReference>
<dbReference type="FunFam" id="4.10.1000.10:FF:000017">
    <property type="entry name" value="Cleavage and polyadenylation specificity factor 30 kDa subunit"/>
    <property type="match status" value="1"/>
</dbReference>
<dbReference type="Gene3D" id="3.10.590.10">
    <property type="entry name" value="ph1033 like domains"/>
    <property type="match status" value="1"/>
</dbReference>
<dbReference type="Gene3D" id="4.10.1000.10">
    <property type="entry name" value="Zinc finger, CCCH-type"/>
    <property type="match status" value="1"/>
</dbReference>
<dbReference type="InterPro" id="IPR007275">
    <property type="entry name" value="YTH_domain"/>
</dbReference>
<dbReference type="InterPro" id="IPR045168">
    <property type="entry name" value="YTH_prot"/>
</dbReference>
<dbReference type="InterPro" id="IPR000571">
    <property type="entry name" value="Znf_CCCH"/>
</dbReference>
<dbReference type="InterPro" id="IPR036855">
    <property type="entry name" value="Znf_CCCH_sf"/>
</dbReference>
<dbReference type="PANTHER" id="PTHR12357:SF119">
    <property type="entry name" value="30-KDA CLEAVAGE AND POLYADENYLATION SPECIFICITY FACTOR 30"/>
    <property type="match status" value="1"/>
</dbReference>
<dbReference type="PANTHER" id="PTHR12357">
    <property type="entry name" value="YTH YT521-B HOMOLOGY DOMAIN-CONTAINING"/>
    <property type="match status" value="1"/>
</dbReference>
<dbReference type="Pfam" id="PF04146">
    <property type="entry name" value="YTH"/>
    <property type="match status" value="1"/>
</dbReference>
<dbReference type="SMART" id="SM00356">
    <property type="entry name" value="ZnF_C3H1"/>
    <property type="match status" value="3"/>
</dbReference>
<dbReference type="SUPFAM" id="SSF90229">
    <property type="entry name" value="CCCH zinc finger"/>
    <property type="match status" value="1"/>
</dbReference>
<dbReference type="PROSITE" id="PS50882">
    <property type="entry name" value="YTH"/>
    <property type="match status" value="1"/>
</dbReference>
<dbReference type="PROSITE" id="PS50103">
    <property type="entry name" value="ZF_C3H1"/>
    <property type="match status" value="3"/>
</dbReference>
<gene>
    <name evidence="18" type="primary">CPSF30</name>
    <name evidence="19" type="synonym">OXT6</name>
    <name evidence="21" type="ordered locus">At1g30460</name>
    <name evidence="22" type="ORF">F26G16.5</name>
    <name evidence="23" type="ORF">F26G16.6</name>
</gene>
<accession>A9LNK9</accession>
<accession>Q9S9Q5</accession>
<accession>Q9S9Q6</accession>
<proteinExistence type="evidence at protein level"/>
<evidence type="ECO:0000250" key="1">
    <source>
        <dbReference type="UniProtKB" id="O95639"/>
    </source>
</evidence>
<evidence type="ECO:0000255" key="2">
    <source>
        <dbReference type="PROSITE-ProRule" id="PRU00225"/>
    </source>
</evidence>
<evidence type="ECO:0000255" key="3">
    <source>
        <dbReference type="PROSITE-ProRule" id="PRU00723"/>
    </source>
</evidence>
<evidence type="ECO:0000256" key="4">
    <source>
        <dbReference type="SAM" id="MobiDB-lite"/>
    </source>
</evidence>
<evidence type="ECO:0000269" key="5">
    <source>
    </source>
</evidence>
<evidence type="ECO:0000269" key="6">
    <source>
    </source>
</evidence>
<evidence type="ECO:0000269" key="7">
    <source>
    </source>
</evidence>
<evidence type="ECO:0000269" key="8">
    <source>
    </source>
</evidence>
<evidence type="ECO:0000269" key="9">
    <source>
    </source>
</evidence>
<evidence type="ECO:0000269" key="10">
    <source>
    </source>
</evidence>
<evidence type="ECO:0000269" key="11">
    <source>
    </source>
</evidence>
<evidence type="ECO:0000269" key="12">
    <source>
    </source>
</evidence>
<evidence type="ECO:0000269" key="13">
    <source>
    </source>
</evidence>
<evidence type="ECO:0000269" key="14">
    <source>
    </source>
</evidence>
<evidence type="ECO:0000269" key="15">
    <source>
    </source>
</evidence>
<evidence type="ECO:0000269" key="16">
    <source>
    </source>
</evidence>
<evidence type="ECO:0000303" key="17">
    <source>
    </source>
</evidence>
<evidence type="ECO:0000303" key="18">
    <source>
    </source>
</evidence>
<evidence type="ECO:0000303" key="19">
    <source>
    </source>
</evidence>
<evidence type="ECO:0000305" key="20"/>
<evidence type="ECO:0000312" key="21">
    <source>
        <dbReference type="Araport" id="AT1G30460"/>
    </source>
</evidence>
<evidence type="ECO:0000312" key="22">
    <source>
        <dbReference type="EMBL" id="AAF19746.1"/>
    </source>
</evidence>
<evidence type="ECO:0000312" key="23">
    <source>
        <dbReference type="EMBL" id="AAF19747.1"/>
    </source>
</evidence>
<evidence type="ECO:0007744" key="24">
    <source>
    </source>
</evidence>
<evidence type="ECO:0007829" key="25">
    <source>
        <dbReference type="PDB" id="5ZUU"/>
    </source>
</evidence>
<reference key="1">
    <citation type="journal article" date="2006" name="Plant Physiol.">
        <title>Calmodulin interacts with and regulates the RNA-binding activity of an Arabidopsis polyadenylation factor subunit.</title>
        <authorList>
            <person name="Delaney K.J."/>
            <person name="Xu R."/>
            <person name="Zhang J."/>
            <person name="Li Q.Q."/>
            <person name="Yun K.-Y."/>
            <person name="Falcone D.L."/>
            <person name="Hunt A.G."/>
        </authorList>
    </citation>
    <scope>NUCLEOTIDE SEQUENCE [MRNA] (ISOFORM 1)</scope>
    <scope>FUNCTION</scope>
    <scope>SUBUNIT</scope>
    <scope>SUBCELLULAR LOCATION</scope>
    <source>
        <strain>cv. Columbia</strain>
    </source>
</reference>
<reference key="2">
    <citation type="journal article" date="2006" name="Plant Mol. Biol.">
        <title>The 73 kD subunit of the cleavage and polyadenylation specificity factor (CPSF) complex affects reproductive development in Arabidopsis.</title>
        <authorList>
            <person name="Xu R."/>
            <person name="Zhao H."/>
            <person name="Dinkins R.D."/>
            <person name="Cheng X."/>
            <person name="Carberry G."/>
            <person name="Li Q.Q."/>
        </authorList>
    </citation>
    <scope>NUCLEOTIDE SEQUENCE [MRNA] (ISOFORM 2)</scope>
    <scope>SUBUNIT</scope>
    <scope>TISSUE SPECIFICITY</scope>
</reference>
<reference key="3">
    <citation type="journal article" date="2000" name="Nature">
        <title>Sequence and analysis of chromosome 1 of the plant Arabidopsis thaliana.</title>
        <authorList>
            <person name="Theologis A."/>
            <person name="Ecker J.R."/>
            <person name="Palm C.J."/>
            <person name="Federspiel N.A."/>
            <person name="Kaul S."/>
            <person name="White O."/>
            <person name="Alonso J."/>
            <person name="Altafi H."/>
            <person name="Araujo R."/>
            <person name="Bowman C.L."/>
            <person name="Brooks S.Y."/>
            <person name="Buehler E."/>
            <person name="Chan A."/>
            <person name="Chao Q."/>
            <person name="Chen H."/>
            <person name="Cheuk R.F."/>
            <person name="Chin C.W."/>
            <person name="Chung M.K."/>
            <person name="Conn L."/>
            <person name="Conway A.B."/>
            <person name="Conway A.R."/>
            <person name="Creasy T.H."/>
            <person name="Dewar K."/>
            <person name="Dunn P."/>
            <person name="Etgu P."/>
            <person name="Feldblyum T.V."/>
            <person name="Feng J.-D."/>
            <person name="Fong B."/>
            <person name="Fujii C.Y."/>
            <person name="Gill J.E."/>
            <person name="Goldsmith A.D."/>
            <person name="Haas B."/>
            <person name="Hansen N.F."/>
            <person name="Hughes B."/>
            <person name="Huizar L."/>
            <person name="Hunter J.L."/>
            <person name="Jenkins J."/>
            <person name="Johnson-Hopson C."/>
            <person name="Khan S."/>
            <person name="Khaykin E."/>
            <person name="Kim C.J."/>
            <person name="Koo H.L."/>
            <person name="Kremenetskaia I."/>
            <person name="Kurtz D.B."/>
            <person name="Kwan A."/>
            <person name="Lam B."/>
            <person name="Langin-Hooper S."/>
            <person name="Lee A."/>
            <person name="Lee J.M."/>
            <person name="Lenz C.A."/>
            <person name="Li J.H."/>
            <person name="Li Y.-P."/>
            <person name="Lin X."/>
            <person name="Liu S.X."/>
            <person name="Liu Z.A."/>
            <person name="Luros J.S."/>
            <person name="Maiti R."/>
            <person name="Marziali A."/>
            <person name="Militscher J."/>
            <person name="Miranda M."/>
            <person name="Nguyen M."/>
            <person name="Nierman W.C."/>
            <person name="Osborne B.I."/>
            <person name="Pai G."/>
            <person name="Peterson J."/>
            <person name="Pham P.K."/>
            <person name="Rizzo M."/>
            <person name="Rooney T."/>
            <person name="Rowley D."/>
            <person name="Sakano H."/>
            <person name="Salzberg S.L."/>
            <person name="Schwartz J.R."/>
            <person name="Shinn P."/>
            <person name="Southwick A.M."/>
            <person name="Sun H."/>
            <person name="Tallon L.J."/>
            <person name="Tambunga G."/>
            <person name="Toriumi M.J."/>
            <person name="Town C.D."/>
            <person name="Utterback T."/>
            <person name="Van Aken S."/>
            <person name="Vaysberg M."/>
            <person name="Vysotskaia V.S."/>
            <person name="Walker M."/>
            <person name="Wu D."/>
            <person name="Yu G."/>
            <person name="Fraser C.M."/>
            <person name="Venter J.C."/>
            <person name="Davis R.W."/>
        </authorList>
    </citation>
    <scope>NUCLEOTIDE SEQUENCE [LARGE SCALE GENOMIC DNA]</scope>
    <source>
        <strain>cv. Columbia</strain>
    </source>
</reference>
<reference key="4">
    <citation type="journal article" date="2017" name="Plant J.">
        <title>Araport11: a complete reannotation of the Arabidopsis thaliana reference genome.</title>
        <authorList>
            <person name="Cheng C.Y."/>
            <person name="Krishnakumar V."/>
            <person name="Chan A.P."/>
            <person name="Thibaud-Nissen F."/>
            <person name="Schobel S."/>
            <person name="Town C.D."/>
        </authorList>
    </citation>
    <scope>GENOME REANNOTATION</scope>
    <source>
        <strain>cv. Columbia</strain>
    </source>
</reference>
<reference key="5">
    <citation type="journal article" date="2006" name="J. Biol. Chem.">
        <title>An Arabidopsis Fip1 homolog interacts with RNA and provides conceptual links with a number of other polyadenylation factor subunits.</title>
        <authorList>
            <person name="Forbes K.P."/>
            <person name="Addepalli B."/>
            <person name="Hunt A.G."/>
        </authorList>
    </citation>
    <scope>GENE FAMILY</scope>
    <scope>INTERACTION WITH FIPS5</scope>
</reference>
<reference key="6">
    <citation type="journal article" date="2007" name="Nucleic Acids Res.">
        <title>A novel endonuclease activity associated with the Arabidopsis ortholog of the 30-kDa subunit of cleavage and polyadenylation specificity factor.</title>
        <authorList>
            <person name="Addepalli B."/>
            <person name="Hunt A.G."/>
        </authorList>
    </citation>
    <scope>FUNCTION</scope>
    <scope>RNA-BINDING</scope>
    <scope>MUTAGENESIS OF 80-CYS--PHE-86; 108-CYS--HIS-112 AND 134-CYS--HIS-138</scope>
    <scope>ACTIVITY REGULATION</scope>
    <scope>INTERACTION WITH FIPS5</scope>
</reference>
<reference key="7">
    <citation type="journal article" date="2008" name="Arch. Biochem. Biophys.">
        <title>Redox and heavy metal effects on the biochemical activities of an Arabidopsis polyadenylation factor subunit.</title>
        <authorList>
            <person name="Addepalli B."/>
            <person name="Hunt A.G."/>
        </authorList>
    </citation>
    <scope>ACTIVITY REGULATION</scope>
</reference>
<reference key="8">
    <citation type="journal article" date="2008" name="PLoS ONE">
        <title>A polyadenylation factor subunit implicated in regulating oxidative signaling in Arabidopsis thaliana.</title>
        <authorList>
            <person name="Zhang J."/>
            <person name="Addepalli B."/>
            <person name="Yun K.Y."/>
            <person name="Hunt A.G."/>
            <person name="Xu R."/>
            <person name="Rao S."/>
            <person name="Li Q.Q."/>
            <person name="Falcone D.L."/>
        </authorList>
    </citation>
    <scope>FUNCTION</scope>
    <scope>DISRUPTION PHENOTYPE</scope>
    <scope>TISSUE SPECIFICITY</scope>
    <scope>INDUCTION BY METHYL VIOLOGEN</scope>
</reference>
<reference key="9">
    <citation type="journal article" date="2008" name="BMC Genomics">
        <title>Genome-wide analysis of CCCH zinc finger family in Arabidopsis and rice.</title>
        <authorList>
            <person name="Wang D."/>
            <person name="Guo Y."/>
            <person name="Wu C."/>
            <person name="Yang G."/>
            <person name="Li Y."/>
            <person name="Zheng C."/>
        </authorList>
    </citation>
    <scope>NOMENCLATURE</scope>
</reference>
<reference key="10">
    <citation type="journal article" date="2008" name="BMC Genomics">
        <title>Arabidopsis mRNA polyadenylation machinery: comprehensive analysis of protein-protein interactions and gene expression profiling.</title>
        <authorList>
            <person name="Hunt A.G."/>
            <person name="Xu R."/>
            <person name="Addepalli B."/>
            <person name="Rao S."/>
            <person name="Forbes K.P."/>
            <person name="Meeks L.R."/>
            <person name="Xing D."/>
            <person name="Mo M."/>
            <person name="Zhao H."/>
            <person name="Bandyopadhyay A."/>
            <person name="Dampanaboina L."/>
            <person name="Marion A."/>
            <person name="Von Lanken C."/>
            <person name="Li Q.Q."/>
        </authorList>
    </citation>
    <scope>SUBUNIT</scope>
    <scope>HOMODIMER</scope>
    <scope>INTERACTION WITH CPSF100; CPSF160; CFIS2; CLPS3; CSTF77; CSTF50; PAPS2; PAPS3; PCFS1; PCFS4; FIPS3 AND FIPS5</scope>
    <scope>GENE FAMILY</scope>
    <scope>NOMENCLATURE</scope>
</reference>
<reference key="11">
    <citation type="journal article" date="2009" name="BMC Cell Biol.">
        <title>Distinctive interactions of the Arabidopsis homolog of the 30 kD subunit of the cleavage and polyadenylation specificity factor (AtCPSF30) with other polyadenylation factor subunits.</title>
        <authorList>
            <person name="Rao S."/>
            <person name="Dinkins R.D."/>
            <person name="Hunt A.G."/>
        </authorList>
    </citation>
    <scope>SUBCELLULAR LOCATION</scope>
    <scope>INTERACTION WITH CPSF73-I; CPSF73-II; CPSF100 AND CPSF160</scope>
</reference>
<reference key="12">
    <citation type="journal article" date="2009" name="Plant Physiol.">
        <title>Large-scale Arabidopsis phosphoproteome profiling reveals novel chloroplast kinase substrates and phosphorylation networks.</title>
        <authorList>
            <person name="Reiland S."/>
            <person name="Messerli G."/>
            <person name="Baerenfaller K."/>
            <person name="Gerrits B."/>
            <person name="Endler A."/>
            <person name="Grossmann J."/>
            <person name="Gruissem W."/>
            <person name="Baginsky S."/>
        </authorList>
    </citation>
    <scope>PHOSPHORYLATION [LARGE SCALE ANALYSIS] AT SER-610 AND SER-612</scope>
    <scope>IDENTIFICATION BY MASS SPECTROMETRY [LARGE SCALE ANALYSIS]</scope>
</reference>
<reference key="13">
    <citation type="journal article" date="2010" name="FEBS Lett.">
        <title>The Arabidopsis ortholog of the 77 kDa subunit of the cleavage stimulatory factor (AtCstF-77) involved in mRNA polyadenylation is an RNA-binding protein.</title>
        <authorList>
            <person name="Bell S.A."/>
            <person name="Hunt A.G."/>
        </authorList>
    </citation>
    <scope>INTERACTION WITH CSTF77</scope>
    <scope>RNA-BINDING</scope>
</reference>
<reference key="14">
    <citation type="journal article" date="2010" name="FEBS Lett.">
        <title>A disulfide linkage in a CCCH zinc finger motif of an Arabidopsis CPSF30 ortholog.</title>
        <authorList>
            <person name="Addepalli B."/>
            <person name="Limbach P.A."/>
            <person name="Hunt A.G."/>
        </authorList>
    </citation>
    <scope>IDENTIFICATION BY MASS SPECTROMETRY</scope>
    <scope>MUTAGENESIS OF 134-CYS--HIS-138</scope>
</reference>
<reference key="15">
    <citation type="journal article" date="2012" name="Plant Cell">
        <title>Genome-wide control of polyadenylation site choice by CPSF30 in Arabidopsis.</title>
        <authorList>
            <person name="Thomas P.E."/>
            <person name="Wu X."/>
            <person name="Liu M."/>
            <person name="Gaffney B."/>
            <person name="Ji G."/>
            <person name="Li Q.Q."/>
            <person name="Hunt A.G."/>
        </authorList>
    </citation>
    <scope>FUNCTION</scope>
    <scope>DISRUPTION PHENOTYPE</scope>
</reference>
<reference key="16">
    <citation type="journal article" date="2014" name="Plant Physiol.">
        <title>The polyadenylation factor subunit CLEAVAGE AND POLYADENYLATION SPECIFICITY FACTOR30: A key factor of programmed cell death and a regulator of immunity in Arabidopsis.</title>
        <authorList>
            <person name="Bruggeman Q."/>
            <person name="Garmier M."/>
            <person name="de Bont L."/>
            <person name="Soubigou-Taconnat L."/>
            <person name="Mazubert C."/>
            <person name="Benhamed M."/>
            <person name="Raynaud C."/>
            <person name="Bergounioux C."/>
            <person name="Delarue M."/>
        </authorList>
    </citation>
    <scope>FUNCTION</scope>
    <scope>DISRUPTION PHENOTYPE</scope>
    <source>
        <strain>cv. Columbia</strain>
    </source>
</reference>
<name>CPSF_ARATH</name>
<keyword id="KW-0002">3D-structure</keyword>
<keyword id="KW-0025">Alternative splicing</keyword>
<keyword id="KW-0053">Apoptosis</keyword>
<keyword id="KW-0963">Cytoplasm</keyword>
<keyword id="KW-0238">DNA-binding</keyword>
<keyword id="KW-0255">Endonuclease</keyword>
<keyword id="KW-0378">Hydrolase</keyword>
<keyword id="KW-0381">Hypersensitive response</keyword>
<keyword id="KW-0479">Metal-binding</keyword>
<keyword id="KW-0507">mRNA processing</keyword>
<keyword id="KW-0540">Nuclease</keyword>
<keyword id="KW-0539">Nucleus</keyword>
<keyword id="KW-0597">Phosphoprotein</keyword>
<keyword id="KW-0611">Plant defense</keyword>
<keyword id="KW-1185">Reference proteome</keyword>
<keyword id="KW-0677">Repeat</keyword>
<keyword id="KW-0694">RNA-binding</keyword>
<keyword id="KW-0862">Zinc</keyword>
<keyword id="KW-0863">Zinc-finger</keyword>
<sequence length="631" mass="70015">MEDADGLSFDFEGGLDSGPVQNTASVPVAPPENSSSAAVNVAPTYDHSSATVAGAGRGRSFRQTVCRHWLRGLCMKGDACGFLHQFDKARMPICRFFRLYGECREQDCVYKHTNEDIKECNMYKLGFCPNGPDCRYRHAKLPGPPPPVEEVLQKIQQLTTYNYGTNRLYQARNVAPQLQDRPQGQVPMQGQPQESGNLQQQQQQQPQQSQHQVSQTLIPNPADQTNRTSHPLPQGVNRYFVVKSNNRENFELSVQQGVWATQRSNEAKLNEAFDSVENVILIFSVNRTRHFQGCAKMTSRIGGYIGGGNWKHEHGTAQYGRNFSVKWLKLCELSFHKTRNLRNPYNENLPVKISRDCQELEPSVGEQLASLLYLEPDSELMAISIAAEAKREEEKAKGVNPESRAENPDIVPFEDNEEEEEEEDESEEEEESMAGGPQGRGRGRGIMWPPQMPLGRGIRPMPGMGGFPLGVMGPGDAFPYGPGGYNGMPDPFGMGPRPFGPYGPRFGGDFRGPVPGMMFPGRPPQQFPHGGYGMMGGGRGPHMGGMGNAPRGGRPMYYPPATSSARPGPSNRKTPERSDERGVSGDQQNQDASHDMEQFEVGNSLRNEESESEDEDEAPRRSRHGEGKKRR</sequence>
<organism>
    <name type="scientific">Arabidopsis thaliana</name>
    <name type="common">Mouse-ear cress</name>
    <dbReference type="NCBI Taxonomy" id="3702"/>
    <lineage>
        <taxon>Eukaryota</taxon>
        <taxon>Viridiplantae</taxon>
        <taxon>Streptophyta</taxon>
        <taxon>Embryophyta</taxon>
        <taxon>Tracheophyta</taxon>
        <taxon>Spermatophyta</taxon>
        <taxon>Magnoliopsida</taxon>
        <taxon>eudicotyledons</taxon>
        <taxon>Gunneridae</taxon>
        <taxon>Pentapetalae</taxon>
        <taxon>rosids</taxon>
        <taxon>malvids</taxon>
        <taxon>Brassicales</taxon>
        <taxon>Brassicaceae</taxon>
        <taxon>Camelineae</taxon>
        <taxon>Arabidopsis</taxon>
    </lineage>
</organism>
<feature type="chain" id="PRO_0000371970" description="30-kDa cleavage and polyadenylation specificity factor 30">
    <location>
        <begin position="1"/>
        <end position="631"/>
    </location>
</feature>
<feature type="domain" description="YTH" evidence="2">
    <location>
        <begin position="237"/>
        <end position="372"/>
    </location>
</feature>
<feature type="zinc finger region" description="C3H1-type 1" evidence="3">
    <location>
        <begin position="60"/>
        <end position="87"/>
    </location>
</feature>
<feature type="zinc finger region" description="C3H1-type 2" evidence="3">
    <location>
        <begin position="88"/>
        <end position="112"/>
    </location>
</feature>
<feature type="zinc finger region" description="C3H1-type 3" evidence="3">
    <location>
        <begin position="114"/>
        <end position="141"/>
    </location>
</feature>
<feature type="region of interest" description="Disordered" evidence="4">
    <location>
        <begin position="12"/>
        <end position="38"/>
    </location>
</feature>
<feature type="region of interest" description="Disordered" evidence="4">
    <location>
        <begin position="179"/>
        <end position="234"/>
    </location>
</feature>
<feature type="region of interest" description="Disordered" evidence="4">
    <location>
        <begin position="392"/>
        <end position="447"/>
    </location>
</feature>
<feature type="region of interest" description="Disordered" evidence="4">
    <location>
        <begin position="541"/>
        <end position="631"/>
    </location>
</feature>
<feature type="compositionally biased region" description="Low complexity" evidence="4">
    <location>
        <begin position="182"/>
        <end position="215"/>
    </location>
</feature>
<feature type="compositionally biased region" description="Polar residues" evidence="4">
    <location>
        <begin position="216"/>
        <end position="231"/>
    </location>
</feature>
<feature type="compositionally biased region" description="Basic and acidic residues" evidence="4">
    <location>
        <begin position="392"/>
        <end position="407"/>
    </location>
</feature>
<feature type="compositionally biased region" description="Acidic residues" evidence="4">
    <location>
        <begin position="412"/>
        <end position="432"/>
    </location>
</feature>
<feature type="compositionally biased region" description="Basic and acidic residues" evidence="4">
    <location>
        <begin position="573"/>
        <end position="583"/>
    </location>
</feature>
<feature type="compositionally biased region" description="Basic residues" evidence="4">
    <location>
        <begin position="621"/>
        <end position="631"/>
    </location>
</feature>
<feature type="modified residue" description="Phosphoserine" evidence="24">
    <location>
        <position position="610"/>
    </location>
</feature>
<feature type="modified residue" description="Phosphoserine" evidence="24">
    <location>
        <position position="612"/>
    </location>
</feature>
<feature type="splice variant" id="VSP_037127" description="In isoform 2." evidence="17">
    <original>YFVVKSNNRENF</original>
    <variation>CVQSPKVFNWVL</variation>
    <location>
        <begin position="239"/>
        <end position="250"/>
    </location>
</feature>
<feature type="splice variant" id="VSP_037128" description="In isoform 2." evidence="17">
    <location>
        <begin position="251"/>
        <end position="631"/>
    </location>
</feature>
<feature type="mutagenesis site" description="Loss of RNA-binding, but normal endonuclease activity." evidence="8">
    <original>CGFLHQF</original>
    <variation>STFLYQ</variation>
    <location>
        <begin position="80"/>
        <end position="86"/>
    </location>
</feature>
<feature type="mutagenesis site" description="Reduced endonuclease activity, but slightly increased RNA-binding." evidence="8">
    <original>CVYKH</original>
    <variation>QDSTYKY</variation>
    <location>
        <begin position="108"/>
        <end position="112"/>
    </location>
</feature>
<feature type="mutagenesis site" description="Loss of endonuclease activity, slighty reduced RNA-binding, and loss of interaction with FIPS5." evidence="8 14">
    <original>CRYRH</original>
    <variation>STYRY</variation>
    <location>
        <begin position="134"/>
        <end position="138"/>
    </location>
</feature>
<feature type="strand" evidence="25">
    <location>
        <begin position="234"/>
        <end position="245"/>
    </location>
</feature>
<feature type="helix" evidence="25">
    <location>
        <begin position="247"/>
        <end position="256"/>
    </location>
</feature>
<feature type="helix" evidence="25">
    <location>
        <begin position="263"/>
        <end position="265"/>
    </location>
</feature>
<feature type="helix" evidence="25">
    <location>
        <begin position="266"/>
        <end position="275"/>
    </location>
</feature>
<feature type="strand" evidence="25">
    <location>
        <begin position="276"/>
        <end position="285"/>
    </location>
</feature>
<feature type="strand" evidence="25">
    <location>
        <begin position="288"/>
        <end position="297"/>
    </location>
</feature>
<feature type="strand" evidence="25">
    <location>
        <begin position="301"/>
        <end position="303"/>
    </location>
</feature>
<feature type="turn" evidence="25">
    <location>
        <begin position="314"/>
        <end position="317"/>
    </location>
</feature>
<feature type="strand" evidence="25">
    <location>
        <begin position="323"/>
        <end position="334"/>
    </location>
</feature>
<feature type="helix" evidence="25">
    <location>
        <begin position="335"/>
        <end position="338"/>
    </location>
</feature>
<feature type="helix" evidence="25">
    <location>
        <begin position="344"/>
        <end position="346"/>
    </location>
</feature>
<feature type="strand" evidence="25">
    <location>
        <begin position="358"/>
        <end position="360"/>
    </location>
</feature>
<feature type="helix" evidence="25">
    <location>
        <begin position="362"/>
        <end position="374"/>
    </location>
</feature>
<feature type="helix" evidence="25">
    <location>
        <begin position="380"/>
        <end position="392"/>
    </location>
</feature>
<protein>
    <recommendedName>
        <fullName evidence="18">30-kDa cleavage and polyadenylation specificity factor 30</fullName>
        <ecNumber evidence="8">3.1.21.-</ecNumber>
    </recommendedName>
    <alternativeName>
        <fullName evidence="19">Protein OXIDATIVE STRESS TOLERANT 6</fullName>
    </alternativeName>
    <alternativeName>
        <fullName>Zinc finger CCCH domain-containing protein 11</fullName>
        <shortName>AtC3H11</shortName>
    </alternativeName>
</protein>